<accession>A7X333</accession>
<keyword id="KW-0067">ATP-binding</keyword>
<keyword id="KW-0963">Cytoplasm</keyword>
<keyword id="KW-1015">Disulfide bond</keyword>
<keyword id="KW-0547">Nucleotide-binding</keyword>
<keyword id="KW-0694">RNA-binding</keyword>
<keyword id="KW-0808">Transferase</keyword>
<keyword id="KW-0819">tRNA processing</keyword>
<keyword id="KW-0820">tRNA-binding</keyword>
<gene>
    <name evidence="1" type="primary">mnmA</name>
    <name type="synonym">trmU</name>
    <name type="ordered locus">SAHV_1608</name>
</gene>
<reference key="1">
    <citation type="journal article" date="2008" name="Antimicrob. Agents Chemother.">
        <title>Mutated response regulator graR is responsible for phenotypic conversion of Staphylococcus aureus from heterogeneous vancomycin-intermediate resistance to vancomycin-intermediate resistance.</title>
        <authorList>
            <person name="Neoh H.-M."/>
            <person name="Cui L."/>
            <person name="Yuzawa H."/>
            <person name="Takeuchi F."/>
            <person name="Matsuo M."/>
            <person name="Hiramatsu K."/>
        </authorList>
    </citation>
    <scope>NUCLEOTIDE SEQUENCE [LARGE SCALE GENOMIC DNA]</scope>
    <source>
        <strain>Mu3 / ATCC 700698</strain>
    </source>
</reference>
<evidence type="ECO:0000255" key="1">
    <source>
        <dbReference type="HAMAP-Rule" id="MF_00144"/>
    </source>
</evidence>
<proteinExistence type="inferred from homology"/>
<dbReference type="EC" id="2.8.1.13" evidence="1"/>
<dbReference type="EMBL" id="AP009324">
    <property type="protein sequence ID" value="BAF78491.1"/>
    <property type="molecule type" value="Genomic_DNA"/>
</dbReference>
<dbReference type="RefSeq" id="WP_000066096.1">
    <property type="nucleotide sequence ID" value="NC_009782.1"/>
</dbReference>
<dbReference type="SMR" id="A7X333"/>
<dbReference type="KEGG" id="saw:SAHV_1608"/>
<dbReference type="HOGENOM" id="CLU_035188_1_0_9"/>
<dbReference type="GO" id="GO:0005737">
    <property type="term" value="C:cytoplasm"/>
    <property type="evidence" value="ECO:0007669"/>
    <property type="project" value="UniProtKB-SubCell"/>
</dbReference>
<dbReference type="GO" id="GO:0005524">
    <property type="term" value="F:ATP binding"/>
    <property type="evidence" value="ECO:0007669"/>
    <property type="project" value="UniProtKB-KW"/>
</dbReference>
<dbReference type="GO" id="GO:0000049">
    <property type="term" value="F:tRNA binding"/>
    <property type="evidence" value="ECO:0007669"/>
    <property type="project" value="UniProtKB-KW"/>
</dbReference>
<dbReference type="GO" id="GO:0103016">
    <property type="term" value="F:tRNA-uridine 2-sulfurtransferase activity"/>
    <property type="evidence" value="ECO:0007669"/>
    <property type="project" value="UniProtKB-EC"/>
</dbReference>
<dbReference type="GO" id="GO:0002143">
    <property type="term" value="P:tRNA wobble position uridine thiolation"/>
    <property type="evidence" value="ECO:0007669"/>
    <property type="project" value="TreeGrafter"/>
</dbReference>
<dbReference type="CDD" id="cd01998">
    <property type="entry name" value="MnmA_TRMU-like"/>
    <property type="match status" value="1"/>
</dbReference>
<dbReference type="FunFam" id="2.30.30.280:FF:000001">
    <property type="entry name" value="tRNA-specific 2-thiouridylase MnmA"/>
    <property type="match status" value="1"/>
</dbReference>
<dbReference type="FunFam" id="2.40.30.10:FF:000023">
    <property type="entry name" value="tRNA-specific 2-thiouridylase MnmA"/>
    <property type="match status" value="1"/>
</dbReference>
<dbReference type="FunFam" id="3.40.50.620:FF:000004">
    <property type="entry name" value="tRNA-specific 2-thiouridylase MnmA"/>
    <property type="match status" value="1"/>
</dbReference>
<dbReference type="Gene3D" id="2.30.30.280">
    <property type="entry name" value="Adenine nucleotide alpha hydrolases-like domains"/>
    <property type="match status" value="1"/>
</dbReference>
<dbReference type="Gene3D" id="3.40.50.620">
    <property type="entry name" value="HUPs"/>
    <property type="match status" value="1"/>
</dbReference>
<dbReference type="Gene3D" id="2.40.30.10">
    <property type="entry name" value="Translation factors"/>
    <property type="match status" value="1"/>
</dbReference>
<dbReference type="HAMAP" id="MF_00144">
    <property type="entry name" value="tRNA_thiouridyl_MnmA"/>
    <property type="match status" value="1"/>
</dbReference>
<dbReference type="InterPro" id="IPR004506">
    <property type="entry name" value="MnmA-like"/>
</dbReference>
<dbReference type="InterPro" id="IPR046885">
    <property type="entry name" value="MnmA-like_C"/>
</dbReference>
<dbReference type="InterPro" id="IPR046884">
    <property type="entry name" value="MnmA-like_central"/>
</dbReference>
<dbReference type="InterPro" id="IPR023382">
    <property type="entry name" value="MnmA-like_central_sf"/>
</dbReference>
<dbReference type="InterPro" id="IPR014729">
    <property type="entry name" value="Rossmann-like_a/b/a_fold"/>
</dbReference>
<dbReference type="NCBIfam" id="NF001138">
    <property type="entry name" value="PRK00143.1"/>
    <property type="match status" value="1"/>
</dbReference>
<dbReference type="NCBIfam" id="TIGR00420">
    <property type="entry name" value="trmU"/>
    <property type="match status" value="1"/>
</dbReference>
<dbReference type="PANTHER" id="PTHR11933:SF5">
    <property type="entry name" value="MITOCHONDRIAL TRNA-SPECIFIC 2-THIOURIDYLASE 1"/>
    <property type="match status" value="1"/>
</dbReference>
<dbReference type="PANTHER" id="PTHR11933">
    <property type="entry name" value="TRNA 5-METHYLAMINOMETHYL-2-THIOURIDYLATE -METHYLTRANSFERASE"/>
    <property type="match status" value="1"/>
</dbReference>
<dbReference type="Pfam" id="PF03054">
    <property type="entry name" value="tRNA_Me_trans"/>
    <property type="match status" value="1"/>
</dbReference>
<dbReference type="Pfam" id="PF20258">
    <property type="entry name" value="tRNA_Me_trans_C"/>
    <property type="match status" value="1"/>
</dbReference>
<dbReference type="Pfam" id="PF20259">
    <property type="entry name" value="tRNA_Me_trans_M"/>
    <property type="match status" value="1"/>
</dbReference>
<dbReference type="SUPFAM" id="SSF52402">
    <property type="entry name" value="Adenine nucleotide alpha hydrolases-like"/>
    <property type="match status" value="1"/>
</dbReference>
<organism>
    <name type="scientific">Staphylococcus aureus (strain Mu3 / ATCC 700698)</name>
    <dbReference type="NCBI Taxonomy" id="418127"/>
    <lineage>
        <taxon>Bacteria</taxon>
        <taxon>Bacillati</taxon>
        <taxon>Bacillota</taxon>
        <taxon>Bacilli</taxon>
        <taxon>Bacillales</taxon>
        <taxon>Staphylococcaceae</taxon>
        <taxon>Staphylococcus</taxon>
    </lineage>
</organism>
<comment type="function">
    <text evidence="1">Catalyzes the 2-thiolation of uridine at the wobble position (U34) of tRNA, leading to the formation of s(2)U34.</text>
</comment>
<comment type="catalytic activity">
    <reaction evidence="1">
        <text>S-sulfanyl-L-cysteinyl-[protein] + uridine(34) in tRNA + AH2 + ATP = 2-thiouridine(34) in tRNA + L-cysteinyl-[protein] + A + AMP + diphosphate + H(+)</text>
        <dbReference type="Rhea" id="RHEA:47032"/>
        <dbReference type="Rhea" id="RHEA-COMP:10131"/>
        <dbReference type="Rhea" id="RHEA-COMP:11726"/>
        <dbReference type="Rhea" id="RHEA-COMP:11727"/>
        <dbReference type="Rhea" id="RHEA-COMP:11728"/>
        <dbReference type="ChEBI" id="CHEBI:13193"/>
        <dbReference type="ChEBI" id="CHEBI:15378"/>
        <dbReference type="ChEBI" id="CHEBI:17499"/>
        <dbReference type="ChEBI" id="CHEBI:29950"/>
        <dbReference type="ChEBI" id="CHEBI:30616"/>
        <dbReference type="ChEBI" id="CHEBI:33019"/>
        <dbReference type="ChEBI" id="CHEBI:61963"/>
        <dbReference type="ChEBI" id="CHEBI:65315"/>
        <dbReference type="ChEBI" id="CHEBI:87170"/>
        <dbReference type="ChEBI" id="CHEBI:456215"/>
        <dbReference type="EC" id="2.8.1.13"/>
    </reaction>
</comment>
<comment type="subcellular location">
    <subcellularLocation>
        <location evidence="1">Cytoplasm</location>
    </subcellularLocation>
</comment>
<comment type="similarity">
    <text evidence="1">Belongs to the MnmA/TRMU family.</text>
</comment>
<name>MNMA_STAA1</name>
<protein>
    <recommendedName>
        <fullName evidence="1">tRNA-specific 2-thiouridylase MnmA</fullName>
        <ecNumber evidence="1">2.8.1.13</ecNumber>
    </recommendedName>
</protein>
<feature type="chain" id="PRO_1000009580" description="tRNA-specific 2-thiouridylase MnmA">
    <location>
        <begin position="1"/>
        <end position="372"/>
    </location>
</feature>
<feature type="region of interest" description="Interaction with target base in tRNA" evidence="1">
    <location>
        <begin position="97"/>
        <end position="99"/>
    </location>
</feature>
<feature type="region of interest" description="Interaction with tRNA" evidence="1">
    <location>
        <begin position="149"/>
        <end position="151"/>
    </location>
</feature>
<feature type="region of interest" description="Interaction with tRNA" evidence="1">
    <location>
        <begin position="309"/>
        <end position="310"/>
    </location>
</feature>
<feature type="active site" description="Nucleophile" evidence="1">
    <location>
        <position position="102"/>
    </location>
</feature>
<feature type="active site" description="Cysteine persulfide intermediate" evidence="1">
    <location>
        <position position="199"/>
    </location>
</feature>
<feature type="binding site" evidence="1">
    <location>
        <begin position="11"/>
        <end position="18"/>
    </location>
    <ligand>
        <name>ATP</name>
        <dbReference type="ChEBI" id="CHEBI:30616"/>
    </ligand>
</feature>
<feature type="binding site" evidence="1">
    <location>
        <position position="37"/>
    </location>
    <ligand>
        <name>ATP</name>
        <dbReference type="ChEBI" id="CHEBI:30616"/>
    </ligand>
</feature>
<feature type="binding site" evidence="1">
    <location>
        <position position="126"/>
    </location>
    <ligand>
        <name>ATP</name>
        <dbReference type="ChEBI" id="CHEBI:30616"/>
    </ligand>
</feature>
<feature type="site" description="Interaction with tRNA" evidence="1">
    <location>
        <position position="127"/>
    </location>
</feature>
<feature type="site" description="Interaction with tRNA" evidence="1">
    <location>
        <position position="342"/>
    </location>
</feature>
<feature type="disulfide bond" description="Alternate" evidence="1">
    <location>
        <begin position="102"/>
        <end position="199"/>
    </location>
</feature>
<sequence length="372" mass="42134">MSNKDIRVVVGMSGGVDSSVTAHVLKEQGYDVIGIFMKNWDDTDENGVCTATEDYNDVIEVCNQIGIPYYAVNFEKEYWDKVFTYFLDEYKKGRTPNPDVMCNKEIKFKAFLDHAMNLGADYVATGHYARIHRHEDGHVEMLRGVDNNKDQTYFLNQLSQQQLSKVMFPIGDIEKSEVRRIAEEQGLVTAKKKDSTGICFIGEKNFKTFLSQYLPAQPGDMITLDGKKMGKHSGLMYYTIGQRHGLGIGGDGDPWFVVGKNLKDNVLYVEQGFHHDALYSDYLIASDYSFVNPEDNDLDQGFECTAKFRYRQKDTKVFVKRENDHALRVTFAEPVRAITPGQAVVFYQGDVCLGGATIDDVFKNEGQLNFVV</sequence>